<evidence type="ECO:0000255" key="1">
    <source>
        <dbReference type="HAMAP-Rule" id="MF_00108"/>
    </source>
</evidence>
<keyword id="KW-0414">Isoprene biosynthesis</keyword>
<keyword id="KW-0548">Nucleotidyltransferase</keyword>
<keyword id="KW-0808">Transferase</keyword>
<accession>C0ZPR7</accession>
<feature type="chain" id="PRO_1000202897" description="2-C-methyl-D-erythritol 4-phosphate cytidylyltransferase">
    <location>
        <begin position="1"/>
        <end position="232"/>
    </location>
</feature>
<feature type="site" description="Transition state stabilizer" evidence="1">
    <location>
        <position position="15"/>
    </location>
</feature>
<feature type="site" description="Transition state stabilizer" evidence="1">
    <location>
        <position position="22"/>
    </location>
</feature>
<feature type="site" description="Positions MEP for the nucleophilic attack" evidence="1">
    <location>
        <position position="151"/>
    </location>
</feature>
<feature type="site" description="Positions MEP for the nucleophilic attack" evidence="1">
    <location>
        <position position="204"/>
    </location>
</feature>
<comment type="function">
    <text evidence="1">Catalyzes the formation of 4-diphosphocytidyl-2-C-methyl-D-erythritol from CTP and 2-C-methyl-D-erythritol 4-phosphate (MEP).</text>
</comment>
<comment type="catalytic activity">
    <reaction evidence="1">
        <text>2-C-methyl-D-erythritol 4-phosphate + CTP + H(+) = 4-CDP-2-C-methyl-D-erythritol + diphosphate</text>
        <dbReference type="Rhea" id="RHEA:13429"/>
        <dbReference type="ChEBI" id="CHEBI:15378"/>
        <dbReference type="ChEBI" id="CHEBI:33019"/>
        <dbReference type="ChEBI" id="CHEBI:37563"/>
        <dbReference type="ChEBI" id="CHEBI:57823"/>
        <dbReference type="ChEBI" id="CHEBI:58262"/>
        <dbReference type="EC" id="2.7.7.60"/>
    </reaction>
</comment>
<comment type="pathway">
    <text evidence="1">Isoprenoid biosynthesis; isopentenyl diphosphate biosynthesis via DXP pathway; isopentenyl diphosphate from 1-deoxy-D-xylulose 5-phosphate: step 2/6.</text>
</comment>
<comment type="similarity">
    <text evidence="1">Belongs to the IspD/TarI cytidylyltransferase family. IspD subfamily.</text>
</comment>
<name>ISPD_RHOE4</name>
<dbReference type="EC" id="2.7.7.60" evidence="1"/>
<dbReference type="EMBL" id="AP008957">
    <property type="protein sequence ID" value="BAH31395.1"/>
    <property type="molecule type" value="Genomic_DNA"/>
</dbReference>
<dbReference type="SMR" id="C0ZPR7"/>
<dbReference type="KEGG" id="rer:RER_06870"/>
<dbReference type="eggNOG" id="COG1211">
    <property type="taxonomic scope" value="Bacteria"/>
</dbReference>
<dbReference type="HOGENOM" id="CLU_061281_1_1_11"/>
<dbReference type="UniPathway" id="UPA00056">
    <property type="reaction ID" value="UER00093"/>
</dbReference>
<dbReference type="Proteomes" id="UP000002204">
    <property type="component" value="Chromosome"/>
</dbReference>
<dbReference type="GO" id="GO:0050518">
    <property type="term" value="F:2-C-methyl-D-erythritol 4-phosphate cytidylyltransferase activity"/>
    <property type="evidence" value="ECO:0007669"/>
    <property type="project" value="UniProtKB-UniRule"/>
</dbReference>
<dbReference type="GO" id="GO:0019288">
    <property type="term" value="P:isopentenyl diphosphate biosynthetic process, methylerythritol 4-phosphate pathway"/>
    <property type="evidence" value="ECO:0007669"/>
    <property type="project" value="UniProtKB-UniRule"/>
</dbReference>
<dbReference type="CDD" id="cd02516">
    <property type="entry name" value="CDP-ME_synthetase"/>
    <property type="match status" value="1"/>
</dbReference>
<dbReference type="FunFam" id="3.90.550.10:FF:000003">
    <property type="entry name" value="2-C-methyl-D-erythritol 4-phosphate cytidylyltransferase"/>
    <property type="match status" value="1"/>
</dbReference>
<dbReference type="Gene3D" id="3.90.550.10">
    <property type="entry name" value="Spore Coat Polysaccharide Biosynthesis Protein SpsA, Chain A"/>
    <property type="match status" value="1"/>
</dbReference>
<dbReference type="HAMAP" id="MF_00108">
    <property type="entry name" value="IspD"/>
    <property type="match status" value="1"/>
</dbReference>
<dbReference type="InterPro" id="IPR001228">
    <property type="entry name" value="IspD"/>
</dbReference>
<dbReference type="InterPro" id="IPR034683">
    <property type="entry name" value="IspD/TarI"/>
</dbReference>
<dbReference type="InterPro" id="IPR050088">
    <property type="entry name" value="IspD/TarI_cytidylyltransf_bact"/>
</dbReference>
<dbReference type="InterPro" id="IPR018294">
    <property type="entry name" value="ISPD_synthase_CS"/>
</dbReference>
<dbReference type="InterPro" id="IPR029044">
    <property type="entry name" value="Nucleotide-diphossugar_trans"/>
</dbReference>
<dbReference type="NCBIfam" id="TIGR00453">
    <property type="entry name" value="ispD"/>
    <property type="match status" value="1"/>
</dbReference>
<dbReference type="PANTHER" id="PTHR32125">
    <property type="entry name" value="2-C-METHYL-D-ERYTHRITOL 4-PHOSPHATE CYTIDYLYLTRANSFERASE, CHLOROPLASTIC"/>
    <property type="match status" value="1"/>
</dbReference>
<dbReference type="PANTHER" id="PTHR32125:SF4">
    <property type="entry name" value="2-C-METHYL-D-ERYTHRITOL 4-PHOSPHATE CYTIDYLYLTRANSFERASE, CHLOROPLASTIC"/>
    <property type="match status" value="1"/>
</dbReference>
<dbReference type="Pfam" id="PF01128">
    <property type="entry name" value="IspD"/>
    <property type="match status" value="1"/>
</dbReference>
<dbReference type="SUPFAM" id="SSF53448">
    <property type="entry name" value="Nucleotide-diphospho-sugar transferases"/>
    <property type="match status" value="1"/>
</dbReference>
<dbReference type="PROSITE" id="PS01295">
    <property type="entry name" value="ISPD"/>
    <property type="match status" value="1"/>
</dbReference>
<proteinExistence type="inferred from homology"/>
<protein>
    <recommendedName>
        <fullName evidence="1">2-C-methyl-D-erythritol 4-phosphate cytidylyltransferase</fullName>
        <ecNumber evidence="1">2.7.7.60</ecNumber>
    </recommendedName>
    <alternativeName>
        <fullName evidence="1">4-diphosphocytidyl-2C-methyl-D-erythritol synthase</fullName>
    </alternativeName>
    <alternativeName>
        <fullName evidence="1">MEP cytidylyltransferase</fullName>
        <shortName evidence="1">MCT</shortName>
    </alternativeName>
</protein>
<organism>
    <name type="scientific">Rhodococcus erythropolis (strain PR4 / NBRC 100887)</name>
    <dbReference type="NCBI Taxonomy" id="234621"/>
    <lineage>
        <taxon>Bacteria</taxon>
        <taxon>Bacillati</taxon>
        <taxon>Actinomycetota</taxon>
        <taxon>Actinomycetes</taxon>
        <taxon>Mycobacteriales</taxon>
        <taxon>Nocardiaceae</taxon>
        <taxon>Rhodococcus</taxon>
        <taxon>Rhodococcus erythropolis group</taxon>
    </lineage>
</organism>
<reference key="1">
    <citation type="submission" date="2005-03" db="EMBL/GenBank/DDBJ databases">
        <title>Comparison of the complete genome sequences of Rhodococcus erythropolis PR4 and Rhodococcus opacus B4.</title>
        <authorList>
            <person name="Takarada H."/>
            <person name="Sekine M."/>
            <person name="Hosoyama A."/>
            <person name="Yamada R."/>
            <person name="Fujisawa T."/>
            <person name="Omata S."/>
            <person name="Shimizu A."/>
            <person name="Tsukatani N."/>
            <person name="Tanikawa S."/>
            <person name="Fujita N."/>
            <person name="Harayama S."/>
        </authorList>
    </citation>
    <scope>NUCLEOTIDE SEQUENCE [LARGE SCALE GENOMIC DNA]</scope>
    <source>
        <strain>PR4 / NBRC 100887</strain>
    </source>
</reference>
<gene>
    <name evidence="1" type="primary">ispD</name>
    <name type="ordered locus">RER_06870</name>
</gene>
<sequence length="232" mass="23607">MAVVALVPAAGRGVRLGEKLPKAFVELGGCTMLARAVDGLRKSGAIDRVVVIVPPELVESVVADLGRASDVDVVGGGAERTDSVRAGLSAAGDADFVLVHDAARALTPPALIARVVDALRAGSSAVIPVLPVTDTIKSVDVLGAVTGTPLRSELRAVQTPQGFSTDVLRSAYDAGDVAATDDAALVERLGVSVQTIPGDALAFKITTPLDLVLARALLISETELSADSQDGK</sequence>